<sequence length="273" mass="29963">MAIVKCKPTSAGRRHVVKVVNPELHKGKPFAALLDTKSKTGGRNNYGRITTRHIGGGHKQHYRLIDFKRNKLDIPGVVERLEYDPNRSANIALVLYKDGERRYILAPKGLAAGDQIQAGAHAPIKVGNALPMRNIPVGSTVHNVELKPGKGGQIARSAGSYVQIIAREGNYVTLRLRSGEMRKVLAECSATIGEVGNSEHMLRVLGKAGANRWRGVRPTVRGTAMNPVDHPHGGGEGRNFGKHPVTPWGVQTKGKKTRHNKRTDKYIVRRRGK</sequence>
<evidence type="ECO:0000250" key="1"/>
<evidence type="ECO:0000255" key="2">
    <source>
        <dbReference type="HAMAP-Rule" id="MF_01320"/>
    </source>
</evidence>
<evidence type="ECO:0000256" key="3">
    <source>
        <dbReference type="SAM" id="MobiDB-lite"/>
    </source>
</evidence>
<evidence type="ECO:0000305" key="4"/>
<feature type="initiator methionine" description="Removed" evidence="1">
    <location>
        <position position="1"/>
    </location>
</feature>
<feature type="chain" id="PRO_0000129519" description="Large ribosomal subunit protein uL2">
    <location>
        <begin position="2"/>
        <end position="273"/>
    </location>
</feature>
<feature type="region of interest" description="Disordered" evidence="3">
    <location>
        <begin position="221"/>
        <end position="262"/>
    </location>
</feature>
<feature type="compositionally biased region" description="Basic residues" evidence="3">
    <location>
        <begin position="253"/>
        <end position="262"/>
    </location>
</feature>
<accession>P55835</accession>
<dbReference type="EMBL" id="D64071">
    <property type="protein sequence ID" value="BAA10950.1"/>
    <property type="molecule type" value="Genomic_DNA"/>
</dbReference>
<dbReference type="RefSeq" id="WP_005545487.1">
    <property type="nucleotide sequence ID" value="NZ_VSEW01000015.1"/>
</dbReference>
<dbReference type="SMR" id="P55835"/>
<dbReference type="STRING" id="714.ACT75_03745"/>
<dbReference type="eggNOG" id="COG0090">
    <property type="taxonomic scope" value="Bacteria"/>
</dbReference>
<dbReference type="OMA" id="GGRHPCT"/>
<dbReference type="GO" id="GO:0015934">
    <property type="term" value="C:large ribosomal subunit"/>
    <property type="evidence" value="ECO:0007669"/>
    <property type="project" value="InterPro"/>
</dbReference>
<dbReference type="GO" id="GO:0019843">
    <property type="term" value="F:rRNA binding"/>
    <property type="evidence" value="ECO:0007669"/>
    <property type="project" value="UniProtKB-UniRule"/>
</dbReference>
<dbReference type="GO" id="GO:0003735">
    <property type="term" value="F:structural constituent of ribosome"/>
    <property type="evidence" value="ECO:0007669"/>
    <property type="project" value="InterPro"/>
</dbReference>
<dbReference type="GO" id="GO:0016740">
    <property type="term" value="F:transferase activity"/>
    <property type="evidence" value="ECO:0007669"/>
    <property type="project" value="InterPro"/>
</dbReference>
<dbReference type="GO" id="GO:0002181">
    <property type="term" value="P:cytoplasmic translation"/>
    <property type="evidence" value="ECO:0007669"/>
    <property type="project" value="TreeGrafter"/>
</dbReference>
<dbReference type="FunFam" id="2.30.30.30:FF:000001">
    <property type="entry name" value="50S ribosomal protein L2"/>
    <property type="match status" value="1"/>
</dbReference>
<dbReference type="FunFam" id="2.40.50.140:FF:000003">
    <property type="entry name" value="50S ribosomal protein L2"/>
    <property type="match status" value="1"/>
</dbReference>
<dbReference type="FunFam" id="4.10.950.10:FF:000001">
    <property type="entry name" value="50S ribosomal protein L2"/>
    <property type="match status" value="1"/>
</dbReference>
<dbReference type="Gene3D" id="2.30.30.30">
    <property type="match status" value="1"/>
</dbReference>
<dbReference type="Gene3D" id="2.40.50.140">
    <property type="entry name" value="Nucleic acid-binding proteins"/>
    <property type="match status" value="1"/>
</dbReference>
<dbReference type="Gene3D" id="4.10.950.10">
    <property type="entry name" value="Ribosomal protein L2, domain 3"/>
    <property type="match status" value="1"/>
</dbReference>
<dbReference type="HAMAP" id="MF_01320_B">
    <property type="entry name" value="Ribosomal_uL2_B"/>
    <property type="match status" value="1"/>
</dbReference>
<dbReference type="InterPro" id="IPR012340">
    <property type="entry name" value="NA-bd_OB-fold"/>
</dbReference>
<dbReference type="InterPro" id="IPR014722">
    <property type="entry name" value="Rib_uL2_dom2"/>
</dbReference>
<dbReference type="InterPro" id="IPR002171">
    <property type="entry name" value="Ribosomal_uL2"/>
</dbReference>
<dbReference type="InterPro" id="IPR005880">
    <property type="entry name" value="Ribosomal_uL2_bac/org-type"/>
</dbReference>
<dbReference type="InterPro" id="IPR022669">
    <property type="entry name" value="Ribosomal_uL2_C"/>
</dbReference>
<dbReference type="InterPro" id="IPR022671">
    <property type="entry name" value="Ribosomal_uL2_CS"/>
</dbReference>
<dbReference type="InterPro" id="IPR014726">
    <property type="entry name" value="Ribosomal_uL2_dom3"/>
</dbReference>
<dbReference type="InterPro" id="IPR022666">
    <property type="entry name" value="Ribosomal_uL2_RNA-bd_dom"/>
</dbReference>
<dbReference type="InterPro" id="IPR008991">
    <property type="entry name" value="Translation_prot_SH3-like_sf"/>
</dbReference>
<dbReference type="NCBIfam" id="TIGR01171">
    <property type="entry name" value="rplB_bact"/>
    <property type="match status" value="1"/>
</dbReference>
<dbReference type="PANTHER" id="PTHR13691:SF5">
    <property type="entry name" value="LARGE RIBOSOMAL SUBUNIT PROTEIN UL2M"/>
    <property type="match status" value="1"/>
</dbReference>
<dbReference type="PANTHER" id="PTHR13691">
    <property type="entry name" value="RIBOSOMAL PROTEIN L2"/>
    <property type="match status" value="1"/>
</dbReference>
<dbReference type="Pfam" id="PF00181">
    <property type="entry name" value="Ribosomal_L2"/>
    <property type="match status" value="1"/>
</dbReference>
<dbReference type="Pfam" id="PF03947">
    <property type="entry name" value="Ribosomal_L2_C"/>
    <property type="match status" value="1"/>
</dbReference>
<dbReference type="PIRSF" id="PIRSF002158">
    <property type="entry name" value="Ribosomal_L2"/>
    <property type="match status" value="1"/>
</dbReference>
<dbReference type="SMART" id="SM01383">
    <property type="entry name" value="Ribosomal_L2"/>
    <property type="match status" value="1"/>
</dbReference>
<dbReference type="SMART" id="SM01382">
    <property type="entry name" value="Ribosomal_L2_C"/>
    <property type="match status" value="1"/>
</dbReference>
<dbReference type="SUPFAM" id="SSF50249">
    <property type="entry name" value="Nucleic acid-binding proteins"/>
    <property type="match status" value="1"/>
</dbReference>
<dbReference type="SUPFAM" id="SSF50104">
    <property type="entry name" value="Translation proteins SH3-like domain"/>
    <property type="match status" value="1"/>
</dbReference>
<dbReference type="PROSITE" id="PS00467">
    <property type="entry name" value="RIBOSOMAL_L2"/>
    <property type="match status" value="1"/>
</dbReference>
<organism>
    <name type="scientific">Aggregatibacter actinomycetemcomitans</name>
    <name type="common">Actinobacillus actinomycetemcomitans</name>
    <name type="synonym">Haemophilus actinomycetemcomitans</name>
    <dbReference type="NCBI Taxonomy" id="714"/>
    <lineage>
        <taxon>Bacteria</taxon>
        <taxon>Pseudomonadati</taxon>
        <taxon>Pseudomonadota</taxon>
        <taxon>Gammaproteobacteria</taxon>
        <taxon>Pasteurellales</taxon>
        <taxon>Pasteurellaceae</taxon>
        <taxon>Aggregatibacter</taxon>
    </lineage>
</organism>
<name>RL2_AGGAC</name>
<proteinExistence type="inferred from homology"/>
<protein>
    <recommendedName>
        <fullName evidence="2">Large ribosomal subunit protein uL2</fullName>
    </recommendedName>
    <alternativeName>
        <fullName evidence="4">50S ribosomal protein L2</fullName>
    </alternativeName>
</protein>
<gene>
    <name evidence="2" type="primary">rplB</name>
</gene>
<reference key="1">
    <citation type="journal article" date="1996" name="Microbiology">
        <title>Molecular analysis of a new insertion sequence from Actinobacillus (Haemophilus) actinomycetemcomitans FDC Y4.</title>
        <authorList>
            <person name="Hayashida H."/>
            <person name="Hotokezaka H."/>
            <person name="Ohara N."/>
            <person name="Kimura M."/>
            <person name="Takagi O."/>
            <person name="Yamada T."/>
        </authorList>
    </citation>
    <scope>NUCLEOTIDE SEQUENCE [GENOMIC DNA]</scope>
    <source>
        <strain>ATCC 43718 / FDC Y4 / Serotype b</strain>
    </source>
</reference>
<keyword id="KW-0687">Ribonucleoprotein</keyword>
<keyword id="KW-0689">Ribosomal protein</keyword>
<keyword id="KW-0694">RNA-binding</keyword>
<keyword id="KW-0699">rRNA-binding</keyword>
<comment type="function">
    <text evidence="2">One of the primary rRNA binding proteins. Required for association of the 30S and 50S subunits to form the 70S ribosome, for tRNA binding and peptide bond formation. It has been suggested to have peptidyltransferase activity; this is somewhat controversial. Makes several contacts with the 16S rRNA in the 70S ribosome.</text>
</comment>
<comment type="subunit">
    <text evidence="2">Part of the 50S ribosomal subunit. Forms a bridge to the 30S subunit in the 70S ribosome.</text>
</comment>
<comment type="similarity">
    <text evidence="2">Belongs to the universal ribosomal protein uL2 family.</text>
</comment>